<sequence length="8" mass="887">MLGFLPLP</sequence>
<protein>
    <recommendedName>
        <fullName evidence="5">Cycloamanide D</fullName>
        <shortName evidence="5">CyA D</shortName>
        <shortName evidence="4">Cyl D</shortName>
    </recommendedName>
</protein>
<feature type="peptide" id="PRO_0000443782" description="Cycloamanide D" evidence="7">
    <location>
        <begin position="1"/>
        <end position="8"/>
    </location>
</feature>
<feature type="cross-link" description="Cyclopeptide (Met-Pro)" evidence="2">
    <location>
        <begin position="1"/>
        <end position="8"/>
    </location>
</feature>
<dbReference type="GO" id="GO:0090729">
    <property type="term" value="F:toxin activity"/>
    <property type="evidence" value="ECO:0007669"/>
    <property type="project" value="UniProtKB-KW"/>
</dbReference>
<accession>P0CU60</accession>
<evidence type="ECO:0000250" key="1">
    <source>
        <dbReference type="UniProtKB" id="A0A067SLB9"/>
    </source>
</evidence>
<evidence type="ECO:0000269" key="2">
    <source>
    </source>
</evidence>
<evidence type="ECO:0000269" key="3">
    <source>
    </source>
</evidence>
<evidence type="ECO:0000303" key="4">
    <source>
    </source>
</evidence>
<evidence type="ECO:0000303" key="5">
    <source>
    </source>
</evidence>
<evidence type="ECO:0000305" key="6"/>
<evidence type="ECO:0000305" key="7">
    <source>
    </source>
</evidence>
<comment type="function">
    <text evidence="2 3">Cyclic octapeptide that belongs to the MSDIN-like toxin family responsible for a large number of food poisoning cases and deaths (PubMed:28866879, PubMed:8441706). Cycloaminide B is non-toxic to mammals but shows immunosuppressive activity, probably through the inhibition of the action of interleukin-1 and interleukin-2 (PubMed:8441706).</text>
</comment>
<comment type="PTM">
    <text evidence="1 2">Processed by the macrocyclase-peptidase enzyme POPB to yield a cyclic octapeptide (PubMed:28866879). POPB first removes 10 residues from the N-terminus (By similarity). Conformational trapping of the remaining peptide forces the enzyme to release this intermediate rather than proceed to macrocyclization (By similarity). The enzyme rebinds the remaining peptide in a different conformation and catalyzes macrocyclization of the N-terminal 8 residues (PubMed:28866879).</text>
</comment>
<comment type="similarity">
    <text evidence="6">Belongs to the MSDIN fungal toxin family.</text>
</comment>
<proteinExistence type="evidence at protein level"/>
<reference key="1">
    <citation type="journal article" date="1993" name="Peptides">
        <title>Immunosuppressive activity in the series of cycloamanide peptides from mushrooms.</title>
        <authorList>
            <person name="Wieczorek Z."/>
            <person name="Siemion I.Z."/>
            <person name="Zimecki M."/>
            <person name="Bolewska-Pedyczak E."/>
            <person name="Wieland T."/>
        </authorList>
    </citation>
    <scope>FUNCTION</scope>
</reference>
<reference key="2">
    <citation type="journal article" date="2018" name="ACS Synth. Biol.">
        <title>Versatility of prolyl oligopeptidase B in peptide macrocyclization.</title>
        <authorList>
            <person name="Sgambelluri R.M."/>
            <person name="Smith M.O."/>
            <person name="Walton J.D."/>
        </authorList>
    </citation>
    <scope>CYCLIZATION</scope>
</reference>
<name>CYAD_AMAPH</name>
<keyword id="KW-0800">Toxin</keyword>
<organism>
    <name type="scientific">Amanita phalloides</name>
    <name type="common">Death cap</name>
    <dbReference type="NCBI Taxonomy" id="67723"/>
    <lineage>
        <taxon>Eukaryota</taxon>
        <taxon>Fungi</taxon>
        <taxon>Dikarya</taxon>
        <taxon>Basidiomycota</taxon>
        <taxon>Agaricomycotina</taxon>
        <taxon>Agaricomycetes</taxon>
        <taxon>Agaricomycetidae</taxon>
        <taxon>Agaricales</taxon>
        <taxon>Pluteineae</taxon>
        <taxon>Amanitaceae</taxon>
        <taxon>Amanita</taxon>
    </lineage>
</organism>